<comment type="function">
    <text evidence="1">Probably deamidates glutamine residues to glutamate on methyl-accepting chemotaxis receptors (MCPs), playing an important role in chemotaxis.</text>
</comment>
<comment type="catalytic activity">
    <reaction evidence="1">
        <text>L-glutaminyl-[protein] + H2O = L-glutamyl-[protein] + NH4(+)</text>
        <dbReference type="Rhea" id="RHEA:16441"/>
        <dbReference type="Rhea" id="RHEA-COMP:10207"/>
        <dbReference type="Rhea" id="RHEA-COMP:10208"/>
        <dbReference type="ChEBI" id="CHEBI:15377"/>
        <dbReference type="ChEBI" id="CHEBI:28938"/>
        <dbReference type="ChEBI" id="CHEBI:29973"/>
        <dbReference type="ChEBI" id="CHEBI:30011"/>
        <dbReference type="EC" id="3.5.1.44"/>
    </reaction>
</comment>
<comment type="similarity">
    <text evidence="1">Belongs to the CheD family.</text>
</comment>
<accession>Q660R6</accession>
<proteinExistence type="inferred from homology"/>
<dbReference type="EC" id="3.5.1.44" evidence="1"/>
<dbReference type="EMBL" id="CP000013">
    <property type="protein sequence ID" value="AAU07455.1"/>
    <property type="molecule type" value="Genomic_DNA"/>
</dbReference>
<dbReference type="RefSeq" id="WP_011193913.1">
    <property type="nucleotide sequence ID" value="NZ_CP028872.1"/>
</dbReference>
<dbReference type="SMR" id="Q660R6"/>
<dbReference type="GeneID" id="45161399"/>
<dbReference type="KEGG" id="bga:BG0619"/>
<dbReference type="eggNOG" id="COG1871">
    <property type="taxonomic scope" value="Bacteria"/>
</dbReference>
<dbReference type="HOGENOM" id="CLU_087854_0_0_12"/>
<dbReference type="OrthoDB" id="9807202at2"/>
<dbReference type="Proteomes" id="UP000002276">
    <property type="component" value="Chromosome"/>
</dbReference>
<dbReference type="GO" id="GO:0050568">
    <property type="term" value="F:protein-glutamine glutaminase activity"/>
    <property type="evidence" value="ECO:0007669"/>
    <property type="project" value="UniProtKB-UniRule"/>
</dbReference>
<dbReference type="GO" id="GO:0006935">
    <property type="term" value="P:chemotaxis"/>
    <property type="evidence" value="ECO:0007669"/>
    <property type="project" value="UniProtKB-UniRule"/>
</dbReference>
<dbReference type="CDD" id="cd16352">
    <property type="entry name" value="CheD"/>
    <property type="match status" value="1"/>
</dbReference>
<dbReference type="Gene3D" id="3.30.1330.200">
    <property type="match status" value="1"/>
</dbReference>
<dbReference type="HAMAP" id="MF_01440">
    <property type="entry name" value="CheD"/>
    <property type="match status" value="1"/>
</dbReference>
<dbReference type="InterPro" id="IPR038592">
    <property type="entry name" value="CheD-like_sf"/>
</dbReference>
<dbReference type="InterPro" id="IPR005659">
    <property type="entry name" value="Chemorcpt_Glu_NH3ase_CheD"/>
</dbReference>
<dbReference type="InterPro" id="IPR011324">
    <property type="entry name" value="Cytotoxic_necrot_fac-like_cat"/>
</dbReference>
<dbReference type="NCBIfam" id="NF010017">
    <property type="entry name" value="PRK13494.1"/>
    <property type="match status" value="1"/>
</dbReference>
<dbReference type="PANTHER" id="PTHR35147">
    <property type="entry name" value="CHEMORECEPTOR GLUTAMINE DEAMIDASE CHED-RELATED"/>
    <property type="match status" value="1"/>
</dbReference>
<dbReference type="PANTHER" id="PTHR35147:SF2">
    <property type="entry name" value="CHEMORECEPTOR GLUTAMINE DEAMIDASE CHED-RELATED"/>
    <property type="match status" value="1"/>
</dbReference>
<dbReference type="Pfam" id="PF03975">
    <property type="entry name" value="CheD"/>
    <property type="match status" value="1"/>
</dbReference>
<dbReference type="SUPFAM" id="SSF64438">
    <property type="entry name" value="CNF1/YfiH-like putative cysteine hydrolases"/>
    <property type="match status" value="1"/>
</dbReference>
<gene>
    <name evidence="1" type="primary">cheD</name>
    <name type="ordered locus">BG0619</name>
</gene>
<feature type="chain" id="PRO_0000251011" description="Probable chemoreceptor glutamine deamidase CheD">
    <location>
        <begin position="1"/>
        <end position="163"/>
    </location>
</feature>
<evidence type="ECO:0000255" key="1">
    <source>
        <dbReference type="HAMAP-Rule" id="MF_01440"/>
    </source>
</evidence>
<reference key="1">
    <citation type="journal article" date="2004" name="Nucleic Acids Res.">
        <title>Comparative analysis of the Borrelia garinii genome.</title>
        <authorList>
            <person name="Gloeckner G."/>
            <person name="Lehmann R."/>
            <person name="Romualdi A."/>
            <person name="Pradella S."/>
            <person name="Schulte-Spechtel U."/>
            <person name="Schilhabel M."/>
            <person name="Wilske B."/>
            <person name="Suehnel J."/>
            <person name="Platzer M."/>
        </authorList>
    </citation>
    <scope>NUCLEOTIDE SEQUENCE [LARGE SCALE GENOMIC DNA]</scope>
    <source>
        <strain>ATCC BAA-2496 / DSM 23469 / PBi</strain>
    </source>
</reference>
<keyword id="KW-0145">Chemotaxis</keyword>
<keyword id="KW-0378">Hydrolase</keyword>
<protein>
    <recommendedName>
        <fullName evidence="1">Probable chemoreceptor glutamine deamidase CheD</fullName>
        <ecNumber evidence="1">3.5.1.44</ecNumber>
    </recommendedName>
</protein>
<name>CHED_BORGP</name>
<sequence>MLNHFNFKLKRDVTIIVPGEAFVSNKRVISTILGSCVAVVLCDESNNLIGMNHYVLVRSDLDISPDQRGRYGIYAIPMLINAMLENGANKSNLKAKLFGGTNFMAKGSVKVGLENSEFAVHTLNKYRIPILAKDFDQSKSRKIFAFPENFKVIVEYPDGTKVF</sequence>
<organism>
    <name type="scientific">Borrelia garinii subsp. bavariensis (strain ATCC BAA-2496 / DSM 23469 / PBi)</name>
    <name type="common">Borreliella bavariensis</name>
    <dbReference type="NCBI Taxonomy" id="290434"/>
    <lineage>
        <taxon>Bacteria</taxon>
        <taxon>Pseudomonadati</taxon>
        <taxon>Spirochaetota</taxon>
        <taxon>Spirochaetia</taxon>
        <taxon>Spirochaetales</taxon>
        <taxon>Borreliaceae</taxon>
        <taxon>Borreliella</taxon>
    </lineage>
</organism>